<name>CITD1_SALTI</name>
<organism>
    <name type="scientific">Salmonella typhi</name>
    <dbReference type="NCBI Taxonomy" id="90370"/>
    <lineage>
        <taxon>Bacteria</taxon>
        <taxon>Pseudomonadati</taxon>
        <taxon>Pseudomonadota</taxon>
        <taxon>Gammaproteobacteria</taxon>
        <taxon>Enterobacterales</taxon>
        <taxon>Enterobacteriaceae</taxon>
        <taxon>Salmonella</taxon>
    </lineage>
</organism>
<gene>
    <name evidence="1" type="primary">citD1</name>
    <name type="synonym">citD</name>
    <name type="ordered locus">STY0672</name>
    <name type="ordered locus">t2244</name>
</gene>
<dbReference type="EMBL" id="AL513382">
    <property type="protein sequence ID" value="CAD05100.1"/>
    <property type="molecule type" value="Genomic_DNA"/>
</dbReference>
<dbReference type="EMBL" id="AE014613">
    <property type="protein sequence ID" value="AAO69846.1"/>
    <property type="molecule type" value="Genomic_DNA"/>
</dbReference>
<dbReference type="RefSeq" id="NP_455200.1">
    <property type="nucleotide sequence ID" value="NC_003198.1"/>
</dbReference>
<dbReference type="RefSeq" id="WP_000700679.1">
    <property type="nucleotide sequence ID" value="NZ_WSUR01000015.1"/>
</dbReference>
<dbReference type="SMR" id="Q8XGN1"/>
<dbReference type="STRING" id="220341.gene:17584681"/>
<dbReference type="KEGG" id="stt:t2244"/>
<dbReference type="KEGG" id="sty:STY0672"/>
<dbReference type="PATRIC" id="fig|220341.7.peg.673"/>
<dbReference type="eggNOG" id="COG3052">
    <property type="taxonomic scope" value="Bacteria"/>
</dbReference>
<dbReference type="HOGENOM" id="CLU_158489_0_0_6"/>
<dbReference type="OMA" id="YNWKEID"/>
<dbReference type="OrthoDB" id="9798736at2"/>
<dbReference type="Proteomes" id="UP000000541">
    <property type="component" value="Chromosome"/>
</dbReference>
<dbReference type="Proteomes" id="UP000002670">
    <property type="component" value="Chromosome"/>
</dbReference>
<dbReference type="GO" id="GO:0005737">
    <property type="term" value="C:cytoplasm"/>
    <property type="evidence" value="ECO:0007669"/>
    <property type="project" value="UniProtKB-SubCell"/>
</dbReference>
<dbReference type="HAMAP" id="MF_00805">
    <property type="entry name" value="CitD"/>
    <property type="match status" value="1"/>
</dbReference>
<dbReference type="InterPro" id="IPR006495">
    <property type="entry name" value="CitD"/>
</dbReference>
<dbReference type="InterPro" id="IPR023439">
    <property type="entry name" value="Mal_deCO2ase/Cit_lyase_ACP"/>
</dbReference>
<dbReference type="NCBIfam" id="TIGR01608">
    <property type="entry name" value="citD"/>
    <property type="match status" value="1"/>
</dbReference>
<dbReference type="NCBIfam" id="NF009726">
    <property type="entry name" value="PRK13253.1"/>
    <property type="match status" value="1"/>
</dbReference>
<dbReference type="Pfam" id="PF06857">
    <property type="entry name" value="ACP"/>
    <property type="match status" value="1"/>
</dbReference>
<dbReference type="PIRSF" id="PIRSF002736">
    <property type="entry name" value="Citrt_lyas_gamma"/>
    <property type="match status" value="1"/>
</dbReference>
<proteinExistence type="inferred from homology"/>
<comment type="function">
    <text evidence="1">Covalent carrier of the coenzyme of citrate lyase.</text>
</comment>
<comment type="subunit">
    <text evidence="1">Oligomer with a subunit composition of (alpha,beta,gamma)6.</text>
</comment>
<comment type="subcellular location">
    <subcellularLocation>
        <location evidence="1">Cytoplasm</location>
    </subcellularLocation>
</comment>
<comment type="similarity">
    <text evidence="1">Belongs to the CitD family.</text>
</comment>
<sequence length="98" mass="10777">MKINQLAVAGTLESGDVMIRIAPLDTQDIDLQINSSVEKQFGEAIRATILEVLSRYDVRGVQLNVDDKGALDCILRARLETLLARASGIAALPWEDRQ</sequence>
<accession>Q8XGN1</accession>
<accession>Q7AND2</accession>
<reference key="1">
    <citation type="journal article" date="2001" name="Nature">
        <title>Complete genome sequence of a multiple drug resistant Salmonella enterica serovar Typhi CT18.</title>
        <authorList>
            <person name="Parkhill J."/>
            <person name="Dougan G."/>
            <person name="James K.D."/>
            <person name="Thomson N.R."/>
            <person name="Pickard D."/>
            <person name="Wain J."/>
            <person name="Churcher C.M."/>
            <person name="Mungall K.L."/>
            <person name="Bentley S.D."/>
            <person name="Holden M.T.G."/>
            <person name="Sebaihia M."/>
            <person name="Baker S."/>
            <person name="Basham D."/>
            <person name="Brooks K."/>
            <person name="Chillingworth T."/>
            <person name="Connerton P."/>
            <person name="Cronin A."/>
            <person name="Davis P."/>
            <person name="Davies R.M."/>
            <person name="Dowd L."/>
            <person name="White N."/>
            <person name="Farrar J."/>
            <person name="Feltwell T."/>
            <person name="Hamlin N."/>
            <person name="Haque A."/>
            <person name="Hien T.T."/>
            <person name="Holroyd S."/>
            <person name="Jagels K."/>
            <person name="Krogh A."/>
            <person name="Larsen T.S."/>
            <person name="Leather S."/>
            <person name="Moule S."/>
            <person name="O'Gaora P."/>
            <person name="Parry C."/>
            <person name="Quail M.A."/>
            <person name="Rutherford K.M."/>
            <person name="Simmonds M."/>
            <person name="Skelton J."/>
            <person name="Stevens K."/>
            <person name="Whitehead S."/>
            <person name="Barrell B.G."/>
        </authorList>
    </citation>
    <scope>NUCLEOTIDE SEQUENCE [LARGE SCALE GENOMIC DNA]</scope>
    <source>
        <strain>CT18</strain>
    </source>
</reference>
<reference key="2">
    <citation type="journal article" date="2003" name="J. Bacteriol.">
        <title>Comparative genomics of Salmonella enterica serovar Typhi strains Ty2 and CT18.</title>
        <authorList>
            <person name="Deng W."/>
            <person name="Liou S.-R."/>
            <person name="Plunkett G. III"/>
            <person name="Mayhew G.F."/>
            <person name="Rose D.J."/>
            <person name="Burland V."/>
            <person name="Kodoyianni V."/>
            <person name="Schwartz D.C."/>
            <person name="Blattner F.R."/>
        </authorList>
    </citation>
    <scope>NUCLEOTIDE SEQUENCE [LARGE SCALE GENOMIC DNA]</scope>
    <source>
        <strain>ATCC 700931 / Ty2</strain>
    </source>
</reference>
<feature type="chain" id="PRO_0000214707" description="Citrate lyase acyl carrier protein 1">
    <location>
        <begin position="1"/>
        <end position="98"/>
    </location>
</feature>
<feature type="modified residue" description="O-(phosphoribosyl dephospho-coenzyme A)serine" evidence="1">
    <location>
        <position position="14"/>
    </location>
</feature>
<evidence type="ECO:0000255" key="1">
    <source>
        <dbReference type="HAMAP-Rule" id="MF_00805"/>
    </source>
</evidence>
<keyword id="KW-0963">Cytoplasm</keyword>
<keyword id="KW-0597">Phosphoprotein</keyword>
<protein>
    <recommendedName>
        <fullName evidence="1">Citrate lyase acyl carrier protein 1</fullName>
    </recommendedName>
    <alternativeName>
        <fullName evidence="1">Citrate lyase gamma chain 1</fullName>
    </alternativeName>
</protein>